<evidence type="ECO:0000255" key="1">
    <source>
        <dbReference type="HAMAP-Rule" id="MF_00530"/>
    </source>
</evidence>
<reference key="1">
    <citation type="journal article" date="2006" name="J. Bacteriol.">
        <title>Pathogenomic sequence analysis of Bacillus cereus and Bacillus thuringiensis isolates closely related to Bacillus anthracis.</title>
        <authorList>
            <person name="Han C.S."/>
            <person name="Xie G."/>
            <person name="Challacombe J.F."/>
            <person name="Altherr M.R."/>
            <person name="Bhotika S.S."/>
            <person name="Bruce D."/>
            <person name="Campbell C.S."/>
            <person name="Campbell M.L."/>
            <person name="Chen J."/>
            <person name="Chertkov O."/>
            <person name="Cleland C."/>
            <person name="Dimitrijevic M."/>
            <person name="Doggett N.A."/>
            <person name="Fawcett J.J."/>
            <person name="Glavina T."/>
            <person name="Goodwin L.A."/>
            <person name="Hill K.K."/>
            <person name="Hitchcock P."/>
            <person name="Jackson P.J."/>
            <person name="Keim P."/>
            <person name="Kewalramani A.R."/>
            <person name="Longmire J."/>
            <person name="Lucas S."/>
            <person name="Malfatti S."/>
            <person name="McMurry K."/>
            <person name="Meincke L.J."/>
            <person name="Misra M."/>
            <person name="Moseman B.L."/>
            <person name="Mundt M."/>
            <person name="Munk A.C."/>
            <person name="Okinaka R.T."/>
            <person name="Parson-Quintana B."/>
            <person name="Reilly L.P."/>
            <person name="Richardson P."/>
            <person name="Robinson D.L."/>
            <person name="Rubin E."/>
            <person name="Saunders E."/>
            <person name="Tapia R."/>
            <person name="Tesmer J.G."/>
            <person name="Thayer N."/>
            <person name="Thompson L.S."/>
            <person name="Tice H."/>
            <person name="Ticknor L.O."/>
            <person name="Wills P.L."/>
            <person name="Brettin T.S."/>
            <person name="Gilna P."/>
        </authorList>
    </citation>
    <scope>NUCLEOTIDE SEQUENCE [LARGE SCALE GENOMIC DNA]</scope>
    <source>
        <strain>97-27</strain>
    </source>
</reference>
<accession>Q6HAY1</accession>
<feature type="chain" id="PRO_0000188094" description="ATP synthase epsilon chain">
    <location>
        <begin position="1"/>
        <end position="133"/>
    </location>
</feature>
<gene>
    <name evidence="1" type="primary">atpC</name>
    <name type="ordered locus">BT9727_4986</name>
</gene>
<proteinExistence type="inferred from homology"/>
<comment type="function">
    <text evidence="1">Produces ATP from ADP in the presence of a proton gradient across the membrane.</text>
</comment>
<comment type="subunit">
    <text>F-type ATPases have 2 components, CF(1) - the catalytic core - and CF(0) - the membrane proton channel. CF(1) has five subunits: alpha(3), beta(3), gamma(1), delta(1), epsilon(1). CF(0) has three main subunits: a, b and c.</text>
</comment>
<comment type="subcellular location">
    <subcellularLocation>
        <location evidence="1">Cell membrane</location>
        <topology evidence="1">Peripheral membrane protein</topology>
    </subcellularLocation>
</comment>
<comment type="similarity">
    <text evidence="1">Belongs to the ATPase epsilon chain family.</text>
</comment>
<protein>
    <recommendedName>
        <fullName evidence="1">ATP synthase epsilon chain</fullName>
    </recommendedName>
    <alternativeName>
        <fullName evidence="1">ATP synthase F1 sector epsilon subunit</fullName>
    </alternativeName>
    <alternativeName>
        <fullName evidence="1">F-ATPase epsilon subunit</fullName>
    </alternativeName>
</protein>
<sequence>MKTFPVSIVTPDGPVYEKEVEMVSVKAESGEMGILPGHIPTVAPLKISAVRLKNGGHTDYVAVSGGFIEVRPDKVTVLSSSAEEANHIDIHRANEAKRRAEQRLQDKQAHVDFKRAEMALQRAVNRLNVSDMK</sequence>
<keyword id="KW-0066">ATP synthesis</keyword>
<keyword id="KW-1003">Cell membrane</keyword>
<keyword id="KW-0139">CF(1)</keyword>
<keyword id="KW-0375">Hydrogen ion transport</keyword>
<keyword id="KW-0406">Ion transport</keyword>
<keyword id="KW-0472">Membrane</keyword>
<keyword id="KW-0813">Transport</keyword>
<name>ATPE_BACHK</name>
<dbReference type="EMBL" id="AE017355">
    <property type="protein sequence ID" value="AAT63344.1"/>
    <property type="molecule type" value="Genomic_DNA"/>
</dbReference>
<dbReference type="RefSeq" id="WP_000847211.1">
    <property type="nucleotide sequence ID" value="NC_005957.1"/>
</dbReference>
<dbReference type="RefSeq" id="YP_039295.1">
    <property type="nucleotide sequence ID" value="NC_005957.1"/>
</dbReference>
<dbReference type="SMR" id="Q6HAY1"/>
<dbReference type="GeneID" id="93005819"/>
<dbReference type="KEGG" id="btk:BT9727_4986"/>
<dbReference type="PATRIC" id="fig|281309.8.peg.5303"/>
<dbReference type="HOGENOM" id="CLU_084338_1_3_9"/>
<dbReference type="Proteomes" id="UP000001301">
    <property type="component" value="Chromosome"/>
</dbReference>
<dbReference type="GO" id="GO:0005886">
    <property type="term" value="C:plasma membrane"/>
    <property type="evidence" value="ECO:0007669"/>
    <property type="project" value="UniProtKB-SubCell"/>
</dbReference>
<dbReference type="GO" id="GO:0045259">
    <property type="term" value="C:proton-transporting ATP synthase complex"/>
    <property type="evidence" value="ECO:0007669"/>
    <property type="project" value="UniProtKB-KW"/>
</dbReference>
<dbReference type="GO" id="GO:0005524">
    <property type="term" value="F:ATP binding"/>
    <property type="evidence" value="ECO:0007669"/>
    <property type="project" value="UniProtKB-UniRule"/>
</dbReference>
<dbReference type="GO" id="GO:0046933">
    <property type="term" value="F:proton-transporting ATP synthase activity, rotational mechanism"/>
    <property type="evidence" value="ECO:0007669"/>
    <property type="project" value="UniProtKB-UniRule"/>
</dbReference>
<dbReference type="CDD" id="cd12152">
    <property type="entry name" value="F1-ATPase_delta"/>
    <property type="match status" value="1"/>
</dbReference>
<dbReference type="FunFam" id="1.20.5.440:FF:000001">
    <property type="entry name" value="ATP synthase epsilon chain"/>
    <property type="match status" value="1"/>
</dbReference>
<dbReference type="FunFam" id="2.60.15.10:FF:000001">
    <property type="entry name" value="ATP synthase epsilon chain"/>
    <property type="match status" value="1"/>
</dbReference>
<dbReference type="Gene3D" id="1.20.5.440">
    <property type="entry name" value="ATP synthase delta/epsilon subunit, C-terminal domain"/>
    <property type="match status" value="1"/>
</dbReference>
<dbReference type="Gene3D" id="2.60.15.10">
    <property type="entry name" value="F0F1 ATP synthase delta/epsilon subunit, N-terminal"/>
    <property type="match status" value="1"/>
</dbReference>
<dbReference type="HAMAP" id="MF_00530">
    <property type="entry name" value="ATP_synth_epsil_bac"/>
    <property type="match status" value="1"/>
</dbReference>
<dbReference type="InterPro" id="IPR036794">
    <property type="entry name" value="ATP_F1_dsu/esu_C_sf"/>
</dbReference>
<dbReference type="InterPro" id="IPR001469">
    <property type="entry name" value="ATP_synth_F1_dsu/esu"/>
</dbReference>
<dbReference type="InterPro" id="IPR020546">
    <property type="entry name" value="ATP_synth_F1_dsu/esu_N"/>
</dbReference>
<dbReference type="InterPro" id="IPR020547">
    <property type="entry name" value="ATP_synth_F1_esu_C"/>
</dbReference>
<dbReference type="InterPro" id="IPR036771">
    <property type="entry name" value="ATPsynth_dsu/esu_N"/>
</dbReference>
<dbReference type="NCBIfam" id="TIGR01216">
    <property type="entry name" value="ATP_synt_epsi"/>
    <property type="match status" value="1"/>
</dbReference>
<dbReference type="NCBIfam" id="NF001846">
    <property type="entry name" value="PRK00571.1-3"/>
    <property type="match status" value="1"/>
</dbReference>
<dbReference type="NCBIfam" id="NF009980">
    <property type="entry name" value="PRK13446.1"/>
    <property type="match status" value="1"/>
</dbReference>
<dbReference type="PANTHER" id="PTHR13822">
    <property type="entry name" value="ATP SYNTHASE DELTA/EPSILON CHAIN"/>
    <property type="match status" value="1"/>
</dbReference>
<dbReference type="PANTHER" id="PTHR13822:SF10">
    <property type="entry name" value="ATP SYNTHASE EPSILON CHAIN, CHLOROPLASTIC"/>
    <property type="match status" value="1"/>
</dbReference>
<dbReference type="Pfam" id="PF00401">
    <property type="entry name" value="ATP-synt_DE"/>
    <property type="match status" value="1"/>
</dbReference>
<dbReference type="Pfam" id="PF02823">
    <property type="entry name" value="ATP-synt_DE_N"/>
    <property type="match status" value="1"/>
</dbReference>
<dbReference type="SUPFAM" id="SSF46604">
    <property type="entry name" value="Epsilon subunit of F1F0-ATP synthase C-terminal domain"/>
    <property type="match status" value="1"/>
</dbReference>
<dbReference type="SUPFAM" id="SSF51344">
    <property type="entry name" value="Epsilon subunit of F1F0-ATP synthase N-terminal domain"/>
    <property type="match status" value="1"/>
</dbReference>
<organism>
    <name type="scientific">Bacillus thuringiensis subsp. konkukian (strain 97-27)</name>
    <dbReference type="NCBI Taxonomy" id="281309"/>
    <lineage>
        <taxon>Bacteria</taxon>
        <taxon>Bacillati</taxon>
        <taxon>Bacillota</taxon>
        <taxon>Bacilli</taxon>
        <taxon>Bacillales</taxon>
        <taxon>Bacillaceae</taxon>
        <taxon>Bacillus</taxon>
        <taxon>Bacillus cereus group</taxon>
    </lineage>
</organism>